<evidence type="ECO:0000255" key="1">
    <source>
        <dbReference type="HAMAP-Rule" id="MF_00041"/>
    </source>
</evidence>
<sequence length="468" mass="51929">MTDRPRLRLHDTAAGAVRDFVPLRDGHVSIYLCGATVQGLPHIGHVRSGVAFDILRRWLIALGYDVAFIRNVTDIDDKILNKAAAAGRPWWEWAATYERAFSAAYDALDVLPPSAEPRATGHITQMVELIERLIEKGHAYTGDGDVYFDVLSYPEYGQLSGHRIDDVHQGEGVASGKRDQRDFTLWKGAKPGEPSWPTPWGRGRPGWHTECVAMAHEYLGPEFDIHCGGMDLVFPHHENEIAQSRAAGDGFARYWLHNGWVTMGGEKMSKSLGNVLAIPAMLQRVRPAELRYYLGSAHYRSMLEFSDTALQDAVKAYVGVEEFLHRVRVRVGAVEPGEPNPRFADALNDDLAVPAALAEVHQARAEGNRALDSGDHEGALRQARSIRAMMGILGCDPLHERWETRDETSAALAAVDVLVRAELQNREKAREQRNWALADEIRNRLKQAGIEVTDTADGPQWTLGGDGK</sequence>
<reference key="1">
    <citation type="journal article" date="2005" name="Proc. Natl. Acad. Sci. U.S.A.">
        <title>The complete genome sequence of Mycobacterium avium subspecies paratuberculosis.</title>
        <authorList>
            <person name="Li L."/>
            <person name="Bannantine J.P."/>
            <person name="Zhang Q."/>
            <person name="Amonsin A."/>
            <person name="May B.J."/>
            <person name="Alt D."/>
            <person name="Banerji N."/>
            <person name="Kanjilal S."/>
            <person name="Kapur V."/>
        </authorList>
    </citation>
    <scope>NUCLEOTIDE SEQUENCE [LARGE SCALE GENOMIC DNA]</scope>
    <source>
        <strain>ATCC BAA-968 / K-10</strain>
    </source>
</reference>
<protein>
    <recommendedName>
        <fullName evidence="1">Cysteine--tRNA ligase</fullName>
        <ecNumber evidence="1">6.1.1.16</ecNumber>
    </recommendedName>
    <alternativeName>
        <fullName evidence="1">Cysteinyl-tRNA synthetase</fullName>
        <shortName evidence="1">CysRS</shortName>
    </alternativeName>
</protein>
<gene>
    <name evidence="1" type="primary">cysS</name>
    <name type="synonym">cysS1</name>
    <name type="ordered locus">MAP_0478</name>
</gene>
<dbReference type="EC" id="6.1.1.16" evidence="1"/>
<dbReference type="EMBL" id="AE016958">
    <property type="protein sequence ID" value="AAS02795.1"/>
    <property type="molecule type" value="Genomic_DNA"/>
</dbReference>
<dbReference type="RefSeq" id="WP_010948871.1">
    <property type="nucleotide sequence ID" value="NZ_CP106873.1"/>
</dbReference>
<dbReference type="SMR" id="Q743W3"/>
<dbReference type="STRING" id="262316.MAP_0478"/>
<dbReference type="KEGG" id="mpa:MAP_0478"/>
<dbReference type="PATRIC" id="fig|262316.17.peg.509"/>
<dbReference type="eggNOG" id="COG0215">
    <property type="taxonomic scope" value="Bacteria"/>
</dbReference>
<dbReference type="HOGENOM" id="CLU_013528_0_1_11"/>
<dbReference type="Proteomes" id="UP000000580">
    <property type="component" value="Chromosome"/>
</dbReference>
<dbReference type="GO" id="GO:0005829">
    <property type="term" value="C:cytosol"/>
    <property type="evidence" value="ECO:0007669"/>
    <property type="project" value="TreeGrafter"/>
</dbReference>
<dbReference type="GO" id="GO:0005524">
    <property type="term" value="F:ATP binding"/>
    <property type="evidence" value="ECO:0007669"/>
    <property type="project" value="UniProtKB-UniRule"/>
</dbReference>
<dbReference type="GO" id="GO:0004817">
    <property type="term" value="F:cysteine-tRNA ligase activity"/>
    <property type="evidence" value="ECO:0007669"/>
    <property type="project" value="UniProtKB-UniRule"/>
</dbReference>
<dbReference type="GO" id="GO:0008270">
    <property type="term" value="F:zinc ion binding"/>
    <property type="evidence" value="ECO:0007669"/>
    <property type="project" value="UniProtKB-UniRule"/>
</dbReference>
<dbReference type="GO" id="GO:0006423">
    <property type="term" value="P:cysteinyl-tRNA aminoacylation"/>
    <property type="evidence" value="ECO:0007669"/>
    <property type="project" value="UniProtKB-UniRule"/>
</dbReference>
<dbReference type="CDD" id="cd00672">
    <property type="entry name" value="CysRS_core"/>
    <property type="match status" value="1"/>
</dbReference>
<dbReference type="FunFam" id="3.40.50.620:FF:000068">
    <property type="entry name" value="Cysteine--tRNA ligase"/>
    <property type="match status" value="1"/>
</dbReference>
<dbReference type="Gene3D" id="1.20.120.1910">
    <property type="entry name" value="Cysteine-tRNA ligase, C-terminal anti-codon recognition domain"/>
    <property type="match status" value="1"/>
</dbReference>
<dbReference type="Gene3D" id="3.40.50.620">
    <property type="entry name" value="HUPs"/>
    <property type="match status" value="1"/>
</dbReference>
<dbReference type="HAMAP" id="MF_00041">
    <property type="entry name" value="Cys_tRNA_synth"/>
    <property type="match status" value="1"/>
</dbReference>
<dbReference type="InterPro" id="IPR015803">
    <property type="entry name" value="Cys-tRNA-ligase"/>
</dbReference>
<dbReference type="InterPro" id="IPR015273">
    <property type="entry name" value="Cys-tRNA-synt_Ia_DALR"/>
</dbReference>
<dbReference type="InterPro" id="IPR024909">
    <property type="entry name" value="Cys-tRNA/MSH_ligase"/>
</dbReference>
<dbReference type="InterPro" id="IPR014729">
    <property type="entry name" value="Rossmann-like_a/b/a_fold"/>
</dbReference>
<dbReference type="InterPro" id="IPR032678">
    <property type="entry name" value="tRNA-synt_1_cat_dom"/>
</dbReference>
<dbReference type="InterPro" id="IPR009080">
    <property type="entry name" value="tRNAsynth_Ia_anticodon-bd"/>
</dbReference>
<dbReference type="NCBIfam" id="TIGR00435">
    <property type="entry name" value="cysS"/>
    <property type="match status" value="1"/>
</dbReference>
<dbReference type="PANTHER" id="PTHR10890:SF30">
    <property type="entry name" value="CYSTEINE--TRNA LIGASE"/>
    <property type="match status" value="1"/>
</dbReference>
<dbReference type="PANTHER" id="PTHR10890">
    <property type="entry name" value="CYSTEINYL-TRNA SYNTHETASE"/>
    <property type="match status" value="1"/>
</dbReference>
<dbReference type="Pfam" id="PF09190">
    <property type="entry name" value="DALR_2"/>
    <property type="match status" value="1"/>
</dbReference>
<dbReference type="Pfam" id="PF01406">
    <property type="entry name" value="tRNA-synt_1e"/>
    <property type="match status" value="1"/>
</dbReference>
<dbReference type="PRINTS" id="PR00983">
    <property type="entry name" value="TRNASYNTHCYS"/>
</dbReference>
<dbReference type="SMART" id="SM00840">
    <property type="entry name" value="DALR_2"/>
    <property type="match status" value="1"/>
</dbReference>
<dbReference type="SUPFAM" id="SSF47323">
    <property type="entry name" value="Anticodon-binding domain of a subclass of class I aminoacyl-tRNA synthetases"/>
    <property type="match status" value="1"/>
</dbReference>
<dbReference type="SUPFAM" id="SSF52374">
    <property type="entry name" value="Nucleotidylyl transferase"/>
    <property type="match status" value="1"/>
</dbReference>
<name>SYC_MYCPA</name>
<proteinExistence type="inferred from homology"/>
<accession>Q743W3</accession>
<comment type="catalytic activity">
    <reaction evidence="1">
        <text>tRNA(Cys) + L-cysteine + ATP = L-cysteinyl-tRNA(Cys) + AMP + diphosphate</text>
        <dbReference type="Rhea" id="RHEA:17773"/>
        <dbReference type="Rhea" id="RHEA-COMP:9661"/>
        <dbReference type="Rhea" id="RHEA-COMP:9679"/>
        <dbReference type="ChEBI" id="CHEBI:30616"/>
        <dbReference type="ChEBI" id="CHEBI:33019"/>
        <dbReference type="ChEBI" id="CHEBI:35235"/>
        <dbReference type="ChEBI" id="CHEBI:78442"/>
        <dbReference type="ChEBI" id="CHEBI:78517"/>
        <dbReference type="ChEBI" id="CHEBI:456215"/>
        <dbReference type="EC" id="6.1.1.16"/>
    </reaction>
</comment>
<comment type="cofactor">
    <cofactor evidence="1">
        <name>Zn(2+)</name>
        <dbReference type="ChEBI" id="CHEBI:29105"/>
    </cofactor>
    <text evidence="1">Binds 1 zinc ion per subunit.</text>
</comment>
<comment type="subunit">
    <text evidence="1">Monomer.</text>
</comment>
<comment type="subcellular location">
    <subcellularLocation>
        <location evidence="1">Cytoplasm</location>
    </subcellularLocation>
</comment>
<comment type="similarity">
    <text evidence="1">Belongs to the class-I aminoacyl-tRNA synthetase family.</text>
</comment>
<feature type="chain" id="PRO_0000159439" description="Cysteine--tRNA ligase">
    <location>
        <begin position="1"/>
        <end position="468"/>
    </location>
</feature>
<feature type="short sequence motif" description="'HIGH' region">
    <location>
        <begin position="35"/>
        <end position="45"/>
    </location>
</feature>
<feature type="short sequence motif" description="'KMSKS' region">
    <location>
        <begin position="267"/>
        <end position="271"/>
    </location>
</feature>
<feature type="binding site" evidence="1">
    <location>
        <position position="33"/>
    </location>
    <ligand>
        <name>Zn(2+)</name>
        <dbReference type="ChEBI" id="CHEBI:29105"/>
    </ligand>
</feature>
<feature type="binding site" evidence="1">
    <location>
        <position position="211"/>
    </location>
    <ligand>
        <name>Zn(2+)</name>
        <dbReference type="ChEBI" id="CHEBI:29105"/>
    </ligand>
</feature>
<feature type="binding site" evidence="1">
    <location>
        <position position="236"/>
    </location>
    <ligand>
        <name>Zn(2+)</name>
        <dbReference type="ChEBI" id="CHEBI:29105"/>
    </ligand>
</feature>
<feature type="binding site" evidence="1">
    <location>
        <position position="240"/>
    </location>
    <ligand>
        <name>Zn(2+)</name>
        <dbReference type="ChEBI" id="CHEBI:29105"/>
    </ligand>
</feature>
<feature type="binding site" evidence="1">
    <location>
        <position position="270"/>
    </location>
    <ligand>
        <name>ATP</name>
        <dbReference type="ChEBI" id="CHEBI:30616"/>
    </ligand>
</feature>
<keyword id="KW-0030">Aminoacyl-tRNA synthetase</keyword>
<keyword id="KW-0067">ATP-binding</keyword>
<keyword id="KW-0963">Cytoplasm</keyword>
<keyword id="KW-0436">Ligase</keyword>
<keyword id="KW-0479">Metal-binding</keyword>
<keyword id="KW-0547">Nucleotide-binding</keyword>
<keyword id="KW-0648">Protein biosynthesis</keyword>
<keyword id="KW-1185">Reference proteome</keyword>
<keyword id="KW-0862">Zinc</keyword>
<organism>
    <name type="scientific">Mycolicibacterium paratuberculosis (strain ATCC BAA-968 / K-10)</name>
    <name type="common">Mycobacterium paratuberculosis</name>
    <dbReference type="NCBI Taxonomy" id="262316"/>
    <lineage>
        <taxon>Bacteria</taxon>
        <taxon>Bacillati</taxon>
        <taxon>Actinomycetota</taxon>
        <taxon>Actinomycetes</taxon>
        <taxon>Mycobacteriales</taxon>
        <taxon>Mycobacteriaceae</taxon>
        <taxon>Mycobacterium</taxon>
        <taxon>Mycobacterium avium complex (MAC)</taxon>
    </lineage>
</organism>